<name>PSAI_ORYSI</name>
<organism>
    <name type="scientific">Oryza sativa subsp. indica</name>
    <name type="common">Rice</name>
    <dbReference type="NCBI Taxonomy" id="39946"/>
    <lineage>
        <taxon>Eukaryota</taxon>
        <taxon>Viridiplantae</taxon>
        <taxon>Streptophyta</taxon>
        <taxon>Embryophyta</taxon>
        <taxon>Tracheophyta</taxon>
        <taxon>Spermatophyta</taxon>
        <taxon>Magnoliopsida</taxon>
        <taxon>Liliopsida</taxon>
        <taxon>Poales</taxon>
        <taxon>Poaceae</taxon>
        <taxon>BOP clade</taxon>
        <taxon>Oryzoideae</taxon>
        <taxon>Oryzeae</taxon>
        <taxon>Oryzinae</taxon>
        <taxon>Oryza</taxon>
        <taxon>Oryza sativa</taxon>
    </lineage>
</organism>
<gene>
    <name type="primary">psaI</name>
</gene>
<dbReference type="EMBL" id="AY522329">
    <property type="status" value="NOT_ANNOTATED_CDS"/>
    <property type="molecule type" value="Genomic_DNA"/>
</dbReference>
<dbReference type="RefSeq" id="YP_009161374.1">
    <property type="nucleotide sequence ID" value="NC_027678.1"/>
</dbReference>
<dbReference type="SMR" id="P0C372"/>
<dbReference type="STRING" id="39946.P0C372"/>
<dbReference type="Proteomes" id="UP000007015">
    <property type="component" value="Chloroplast"/>
</dbReference>
<dbReference type="GO" id="GO:0009535">
    <property type="term" value="C:chloroplast thylakoid membrane"/>
    <property type="evidence" value="ECO:0007669"/>
    <property type="project" value="UniProtKB-SubCell"/>
</dbReference>
<dbReference type="GO" id="GO:0009522">
    <property type="term" value="C:photosystem I"/>
    <property type="evidence" value="ECO:0007669"/>
    <property type="project" value="UniProtKB-KW"/>
</dbReference>
<dbReference type="GO" id="GO:0009536">
    <property type="term" value="C:plastid"/>
    <property type="evidence" value="ECO:0000305"/>
    <property type="project" value="Gramene"/>
</dbReference>
<dbReference type="GO" id="GO:0015979">
    <property type="term" value="P:photosynthesis"/>
    <property type="evidence" value="ECO:0007669"/>
    <property type="project" value="UniProtKB-UniRule"/>
</dbReference>
<dbReference type="HAMAP" id="MF_00431">
    <property type="entry name" value="PSI_PsaI"/>
    <property type="match status" value="1"/>
</dbReference>
<dbReference type="InterPro" id="IPR001302">
    <property type="entry name" value="PSI_PsaI"/>
</dbReference>
<dbReference type="InterPro" id="IPR036357">
    <property type="entry name" value="PSI_PsaI_sf"/>
</dbReference>
<dbReference type="NCBIfam" id="TIGR03052">
    <property type="entry name" value="PS_I_psaI"/>
    <property type="match status" value="1"/>
</dbReference>
<dbReference type="PANTHER" id="PTHR35775">
    <property type="match status" value="1"/>
</dbReference>
<dbReference type="PANTHER" id="PTHR35775:SF2">
    <property type="entry name" value="PHOTOSYSTEM I REACTION CENTER SUBUNIT VIII"/>
    <property type="match status" value="1"/>
</dbReference>
<dbReference type="Pfam" id="PF00796">
    <property type="entry name" value="PSI_8"/>
    <property type="match status" value="1"/>
</dbReference>
<dbReference type="SUPFAM" id="SSF81540">
    <property type="entry name" value="Subunit VIII of photosystem I reaction centre, PsaI"/>
    <property type="match status" value="1"/>
</dbReference>
<proteinExistence type="inferred from homology"/>
<geneLocation type="chloroplast"/>
<sequence length="36" mass="4028">MMDFNLPSIFVPLVGLVFPAIAMASLFLYVQKNKIV</sequence>
<feature type="chain" id="PRO_0000288989" description="Photosystem I reaction center subunit VIII">
    <location>
        <begin position="1"/>
        <end position="36"/>
    </location>
</feature>
<feature type="transmembrane region" description="Helical" evidence="2">
    <location>
        <begin position="10"/>
        <end position="30"/>
    </location>
</feature>
<comment type="function">
    <text evidence="1">May help in the organization of the PsaL subunit.</text>
</comment>
<comment type="subcellular location">
    <subcellularLocation>
        <location evidence="1">Plastid</location>
        <location evidence="1">Chloroplast thylakoid membrane</location>
        <topology evidence="1">Single-pass membrane protein</topology>
    </subcellularLocation>
</comment>
<comment type="similarity">
    <text evidence="3">Belongs to the PsaI family.</text>
</comment>
<accession>P0C372</accession>
<protein>
    <recommendedName>
        <fullName>Photosystem I reaction center subunit VIII</fullName>
        <shortName>PSI-I</shortName>
    </recommendedName>
</protein>
<evidence type="ECO:0000250" key="1"/>
<evidence type="ECO:0000255" key="2"/>
<evidence type="ECO:0000305" key="3"/>
<reference key="1">
    <citation type="journal article" date="2004" name="Plant Physiol.">
        <title>A comparison of rice chloroplast genomes.</title>
        <authorList>
            <person name="Tang J."/>
            <person name="Xia H."/>
            <person name="Cao M."/>
            <person name="Zhang X."/>
            <person name="Zeng W."/>
            <person name="Hu S."/>
            <person name="Tong W."/>
            <person name="Wang J."/>
            <person name="Wang J."/>
            <person name="Yu J."/>
            <person name="Yang H."/>
            <person name="Zhu L."/>
        </authorList>
    </citation>
    <scope>NUCLEOTIDE SEQUENCE [LARGE SCALE GENOMIC DNA]</scope>
    <source>
        <strain>cv. 93-11</strain>
    </source>
</reference>
<keyword id="KW-0150">Chloroplast</keyword>
<keyword id="KW-0472">Membrane</keyword>
<keyword id="KW-0602">Photosynthesis</keyword>
<keyword id="KW-0603">Photosystem I</keyword>
<keyword id="KW-0934">Plastid</keyword>
<keyword id="KW-1185">Reference proteome</keyword>
<keyword id="KW-0793">Thylakoid</keyword>
<keyword id="KW-0812">Transmembrane</keyword>
<keyword id="KW-1133">Transmembrane helix</keyword>